<organism>
    <name type="scientific">Salmonella gallinarum (strain 287/91 / NCTC 13346)</name>
    <dbReference type="NCBI Taxonomy" id="550538"/>
    <lineage>
        <taxon>Bacteria</taxon>
        <taxon>Pseudomonadati</taxon>
        <taxon>Pseudomonadota</taxon>
        <taxon>Gammaproteobacteria</taxon>
        <taxon>Enterobacterales</taxon>
        <taxon>Enterobacteriaceae</taxon>
        <taxon>Salmonella</taxon>
    </lineage>
</organism>
<accession>B5RGT6</accession>
<name>USPB_SALG2</name>
<dbReference type="EMBL" id="AM933173">
    <property type="protein sequence ID" value="CAR39623.1"/>
    <property type="molecule type" value="Genomic_DNA"/>
</dbReference>
<dbReference type="RefSeq" id="WP_000626193.1">
    <property type="nucleotide sequence ID" value="NC_011274.1"/>
</dbReference>
<dbReference type="GeneID" id="66757914"/>
<dbReference type="KEGG" id="seg:SG3847"/>
<dbReference type="HOGENOM" id="CLU_151816_0_0_6"/>
<dbReference type="Proteomes" id="UP000008321">
    <property type="component" value="Chromosome"/>
</dbReference>
<dbReference type="GO" id="GO:0005886">
    <property type="term" value="C:plasma membrane"/>
    <property type="evidence" value="ECO:0007669"/>
    <property type="project" value="UniProtKB-SubCell"/>
</dbReference>
<dbReference type="HAMAP" id="MF_01088">
    <property type="entry name" value="UspB"/>
    <property type="match status" value="1"/>
</dbReference>
<dbReference type="InterPro" id="IPR019598">
    <property type="entry name" value="Universal_stress_protein_B"/>
</dbReference>
<dbReference type="NCBIfam" id="NF003435">
    <property type="entry name" value="PRK04960.1"/>
    <property type="match status" value="1"/>
</dbReference>
<dbReference type="Pfam" id="PF10625">
    <property type="entry name" value="UspB"/>
    <property type="match status" value="1"/>
</dbReference>
<evidence type="ECO:0000255" key="1">
    <source>
        <dbReference type="HAMAP-Rule" id="MF_01088"/>
    </source>
</evidence>
<comment type="subcellular location">
    <subcellularLocation>
        <location evidence="1">Cell inner membrane</location>
        <topology evidence="1">Multi-pass membrane protein</topology>
    </subcellularLocation>
</comment>
<comment type="similarity">
    <text evidence="1">Belongs to the universal stress protein B family.</text>
</comment>
<reference key="1">
    <citation type="journal article" date="2008" name="Genome Res.">
        <title>Comparative genome analysis of Salmonella enteritidis PT4 and Salmonella gallinarum 287/91 provides insights into evolutionary and host adaptation pathways.</title>
        <authorList>
            <person name="Thomson N.R."/>
            <person name="Clayton D.J."/>
            <person name="Windhorst D."/>
            <person name="Vernikos G."/>
            <person name="Davidson S."/>
            <person name="Churcher C."/>
            <person name="Quail M.A."/>
            <person name="Stevens M."/>
            <person name="Jones M.A."/>
            <person name="Watson M."/>
            <person name="Barron A."/>
            <person name="Layton A."/>
            <person name="Pickard D."/>
            <person name="Kingsley R.A."/>
            <person name="Bignell A."/>
            <person name="Clark L."/>
            <person name="Harris B."/>
            <person name="Ormond D."/>
            <person name="Abdellah Z."/>
            <person name="Brooks K."/>
            <person name="Cherevach I."/>
            <person name="Chillingworth T."/>
            <person name="Woodward J."/>
            <person name="Norberczak H."/>
            <person name="Lord A."/>
            <person name="Arrowsmith C."/>
            <person name="Jagels K."/>
            <person name="Moule S."/>
            <person name="Mungall K."/>
            <person name="Saunders M."/>
            <person name="Whitehead S."/>
            <person name="Chabalgoity J.A."/>
            <person name="Maskell D."/>
            <person name="Humphreys T."/>
            <person name="Roberts M."/>
            <person name="Barrow P.A."/>
            <person name="Dougan G."/>
            <person name="Parkhill J."/>
        </authorList>
    </citation>
    <scope>NUCLEOTIDE SEQUENCE [LARGE SCALE GENOMIC DNA]</scope>
    <source>
        <strain>287/91 / NCTC 13346</strain>
    </source>
</reference>
<feature type="chain" id="PRO_1000136921" description="Universal stress protein B">
    <location>
        <begin position="1"/>
        <end position="111"/>
    </location>
</feature>
<feature type="transmembrane region" description="Helical" evidence="1">
    <location>
        <begin position="1"/>
        <end position="21"/>
    </location>
</feature>
<feature type="transmembrane region" description="Helical" evidence="1">
    <location>
        <begin position="90"/>
        <end position="110"/>
    </location>
</feature>
<proteinExistence type="inferred from homology"/>
<gene>
    <name evidence="1" type="primary">uspB</name>
    <name type="ordered locus">SG3847</name>
</gene>
<sequence length="111" mass="13014">MISTVSLFWALCVVCIVNMARYFSSLRALLVVLRGCDPLLYQYVDGGGFFTTHGQPNKQVRLVWYIYAQRYRDHHDEEFIRRCERVRRQFLLTSALCGLVVVSLIALMIWH</sequence>
<protein>
    <recommendedName>
        <fullName evidence="1">Universal stress protein B</fullName>
    </recommendedName>
</protein>
<keyword id="KW-0997">Cell inner membrane</keyword>
<keyword id="KW-1003">Cell membrane</keyword>
<keyword id="KW-0472">Membrane</keyword>
<keyword id="KW-0812">Transmembrane</keyword>
<keyword id="KW-1133">Transmembrane helix</keyword>